<feature type="chain" id="PRO_1000206604" description="Small ribosomal subunit protein uS10">
    <location>
        <begin position="1"/>
        <end position="102"/>
    </location>
</feature>
<gene>
    <name evidence="1" type="primary">rps10</name>
    <name type="ordered locus">TGAM_1055</name>
</gene>
<comment type="function">
    <text evidence="1">Involved in the binding of tRNA to the ribosomes.</text>
</comment>
<comment type="subunit">
    <text evidence="1">Part of the 30S ribosomal subunit.</text>
</comment>
<comment type="similarity">
    <text evidence="1">Belongs to the universal ribosomal protein uS10 family.</text>
</comment>
<dbReference type="EMBL" id="CP001398">
    <property type="protein sequence ID" value="ACS33557.1"/>
    <property type="molecule type" value="Genomic_DNA"/>
</dbReference>
<dbReference type="SMR" id="C5A5P5"/>
<dbReference type="STRING" id="593117.TGAM_1055"/>
<dbReference type="PaxDb" id="593117-TGAM_1055"/>
<dbReference type="GeneID" id="7986929"/>
<dbReference type="KEGG" id="tga:TGAM_1055"/>
<dbReference type="PATRIC" id="fig|593117.10.peg.1052"/>
<dbReference type="eggNOG" id="arCOG01758">
    <property type="taxonomic scope" value="Archaea"/>
</dbReference>
<dbReference type="HOGENOM" id="CLU_122625_0_1_2"/>
<dbReference type="OrthoDB" id="371736at2157"/>
<dbReference type="Proteomes" id="UP000001488">
    <property type="component" value="Chromosome"/>
</dbReference>
<dbReference type="GO" id="GO:0015935">
    <property type="term" value="C:small ribosomal subunit"/>
    <property type="evidence" value="ECO:0007669"/>
    <property type="project" value="InterPro"/>
</dbReference>
<dbReference type="GO" id="GO:0003735">
    <property type="term" value="F:structural constituent of ribosome"/>
    <property type="evidence" value="ECO:0007669"/>
    <property type="project" value="InterPro"/>
</dbReference>
<dbReference type="GO" id="GO:0000049">
    <property type="term" value="F:tRNA binding"/>
    <property type="evidence" value="ECO:0007669"/>
    <property type="project" value="UniProtKB-UniRule"/>
</dbReference>
<dbReference type="GO" id="GO:0006412">
    <property type="term" value="P:translation"/>
    <property type="evidence" value="ECO:0007669"/>
    <property type="project" value="UniProtKB-UniRule"/>
</dbReference>
<dbReference type="FunFam" id="3.30.70.600:FF:000004">
    <property type="entry name" value="30S ribosomal protein S10"/>
    <property type="match status" value="1"/>
</dbReference>
<dbReference type="Gene3D" id="3.30.70.600">
    <property type="entry name" value="Ribosomal protein S10 domain"/>
    <property type="match status" value="1"/>
</dbReference>
<dbReference type="HAMAP" id="MF_00508">
    <property type="entry name" value="Ribosomal_uS10"/>
    <property type="match status" value="1"/>
</dbReference>
<dbReference type="InterPro" id="IPR001848">
    <property type="entry name" value="Ribosomal_uS10"/>
</dbReference>
<dbReference type="InterPro" id="IPR018268">
    <property type="entry name" value="Ribosomal_uS10_CS"/>
</dbReference>
<dbReference type="InterPro" id="IPR027486">
    <property type="entry name" value="Ribosomal_uS10_dom"/>
</dbReference>
<dbReference type="InterPro" id="IPR036838">
    <property type="entry name" value="Ribosomal_uS10_dom_sf"/>
</dbReference>
<dbReference type="InterPro" id="IPR005729">
    <property type="entry name" value="Ribosomal_uS10_euk/arc"/>
</dbReference>
<dbReference type="NCBIfam" id="TIGR01046">
    <property type="entry name" value="uS10_euk_arch"/>
    <property type="match status" value="1"/>
</dbReference>
<dbReference type="PANTHER" id="PTHR11700">
    <property type="entry name" value="30S RIBOSOMAL PROTEIN S10 FAMILY MEMBER"/>
    <property type="match status" value="1"/>
</dbReference>
<dbReference type="Pfam" id="PF00338">
    <property type="entry name" value="Ribosomal_S10"/>
    <property type="match status" value="1"/>
</dbReference>
<dbReference type="PRINTS" id="PR00971">
    <property type="entry name" value="RIBOSOMALS10"/>
</dbReference>
<dbReference type="SMART" id="SM01403">
    <property type="entry name" value="Ribosomal_S10"/>
    <property type="match status" value="1"/>
</dbReference>
<dbReference type="SUPFAM" id="SSF54999">
    <property type="entry name" value="Ribosomal protein S10"/>
    <property type="match status" value="1"/>
</dbReference>
<dbReference type="PROSITE" id="PS00361">
    <property type="entry name" value="RIBOSOMAL_S10"/>
    <property type="match status" value="1"/>
</dbReference>
<accession>C5A5P5</accession>
<protein>
    <recommendedName>
        <fullName evidence="1">Small ribosomal subunit protein uS10</fullName>
    </recommendedName>
    <alternativeName>
        <fullName evidence="2">30S ribosomal protein S10</fullName>
    </alternativeName>
</protein>
<name>RS10_THEGJ</name>
<evidence type="ECO:0000255" key="1">
    <source>
        <dbReference type="HAMAP-Rule" id="MF_00508"/>
    </source>
</evidence>
<evidence type="ECO:0000305" key="2"/>
<organism>
    <name type="scientific">Thermococcus gammatolerans (strain DSM 15229 / JCM 11827 / EJ3)</name>
    <dbReference type="NCBI Taxonomy" id="593117"/>
    <lineage>
        <taxon>Archaea</taxon>
        <taxon>Methanobacteriati</taxon>
        <taxon>Methanobacteriota</taxon>
        <taxon>Thermococci</taxon>
        <taxon>Thermococcales</taxon>
        <taxon>Thermococcaceae</taxon>
        <taxon>Thermococcus</taxon>
    </lineage>
</organism>
<keyword id="KW-1185">Reference proteome</keyword>
<keyword id="KW-0687">Ribonucleoprotein</keyword>
<keyword id="KW-0689">Ribosomal protein</keyword>
<proteinExistence type="inferred from homology"/>
<sequence>MQKARIKLASTNIKALNEVTDQIKQIAERTGVRMSGPIPLPTKRIRITTRKSPDGEGTATFDRFELRVHKRLVDIEADERAMRQIMRIRVPEDVTIEIELIS</sequence>
<reference key="1">
    <citation type="journal article" date="2007" name="Genome Biol.">
        <title>Genome analysis and genome-wide proteomics of Thermococcus gammatolerans, the most radioresistant organism known amongst the Archaea.</title>
        <authorList>
            <person name="Zivanovic Y."/>
            <person name="Armengaud J."/>
            <person name="Lagorce A."/>
            <person name="Leplat C."/>
            <person name="Guerin P."/>
            <person name="Dutertre M."/>
            <person name="Anthouard V."/>
            <person name="Forterre P."/>
            <person name="Wincker P."/>
            <person name="Confalonieri F."/>
        </authorList>
    </citation>
    <scope>NUCLEOTIDE SEQUENCE [LARGE SCALE GENOMIC DNA]</scope>
    <source>
        <strain>DSM 15229 / JCM 11827 / EJ3</strain>
    </source>
</reference>